<sequence>MNAIGNFLVGTPVFTIFICLALGYLLGKLKIGSFTLGATVGVLIVALLIGQLGVFPRDTLLGDIFFDFFMFAIGYRVGPSFISSMKKFGAKIVYATLIFLVSAFIVAYACFKMFHIGPGIAAGIIAGGLTQSAVIGSSLETISKLPISDHLKTLYSNQIPIVYTLTYVFGTIGVLIFLRDIMPKLMHIDLKKQAVKTAKELDMIPVPVIVASTHFYTINDGSSLIGQTLGTVNTKFAKGLVAAGLNDSADMASVINAGDVLAISGGIDEIGRAVQEFNLLEVTGKTKAYVSKQVVLKKNFSADVLKNAQDKGVLVATLAGDVMDPAQFSTLKPAESVTLVGQKDAVSEVQSQLGRLRAAENIINYSWFALGIALSAALGIVGTKVSGVPIALGGGTASLIVGLVQSIYRDKHAHMDTIPDSLLEFFQSIGLNLFIATVGLSAAKTFISAIQSMGISVLLIGAVISILPHIITFVICYYLMKMEPISIIGAQTGADTLSAALNDVSERVGSDASPFFAAAVAPAYAIGNIFLTLMGPIFIVLLS</sequence>
<accession>Q8L3K8</accession>
<organism>
    <name type="scientific">Tetragenococcus halophilus</name>
    <name type="common">Pediococcus halophilus</name>
    <dbReference type="NCBI Taxonomy" id="51669"/>
    <lineage>
        <taxon>Bacteria</taxon>
        <taxon>Bacillati</taxon>
        <taxon>Bacillota</taxon>
        <taxon>Bacilli</taxon>
        <taxon>Lactobacillales</taxon>
        <taxon>Enterococcaceae</taxon>
        <taxon>Tetragenococcus</taxon>
    </lineage>
</organism>
<keyword id="KW-0002">3D-structure</keyword>
<keyword id="KW-0050">Antiport</keyword>
<keyword id="KW-1003">Cell membrane</keyword>
<keyword id="KW-0472">Membrane</keyword>
<keyword id="KW-0614">Plasmid</keyword>
<keyword id="KW-0812">Transmembrane</keyword>
<keyword id="KW-1133">Transmembrane helix</keyword>
<keyword id="KW-0813">Transport</keyword>
<geneLocation type="plasmid">
    <name>pD1</name>
</geneLocation>
<dbReference type="EMBL" id="AB072729">
    <property type="protein sequence ID" value="BAB92081.1"/>
    <property type="molecule type" value="Genomic_DNA"/>
</dbReference>
<dbReference type="PDB" id="8XW5">
    <property type="method" value="EM"/>
    <property type="resolution" value="3.56 A"/>
    <property type="chains" value="A/B=1-543"/>
</dbReference>
<dbReference type="PDB" id="8Y1X">
    <property type="method" value="EM"/>
    <property type="resolution" value="3.68 A"/>
    <property type="chains" value="A/B=1-543"/>
</dbReference>
<dbReference type="PDBsum" id="8XW5"/>
<dbReference type="PDBsum" id="8Y1X"/>
<dbReference type="EMDB" id="EMD-38731"/>
<dbReference type="EMDB" id="EMD-38849"/>
<dbReference type="SMR" id="Q8L3K8"/>
<dbReference type="TCDB" id="2.A.81.1.1">
    <property type="family name" value="the aspartate:alanine exchanger (aaex) family"/>
</dbReference>
<dbReference type="GO" id="GO:0005886">
    <property type="term" value="C:plasma membrane"/>
    <property type="evidence" value="ECO:0007669"/>
    <property type="project" value="UniProtKB-SubCell"/>
</dbReference>
<dbReference type="GO" id="GO:0015297">
    <property type="term" value="F:antiporter activity"/>
    <property type="evidence" value="ECO:0007669"/>
    <property type="project" value="UniProtKB-KW"/>
</dbReference>
<dbReference type="GO" id="GO:0042802">
    <property type="term" value="F:identical protein binding"/>
    <property type="evidence" value="ECO:0000353"/>
    <property type="project" value="IntAct"/>
</dbReference>
<dbReference type="InterPro" id="IPR050144">
    <property type="entry name" value="AAE_transporter"/>
</dbReference>
<dbReference type="InterPro" id="IPR022457">
    <property type="entry name" value="Asp_Ala_antiprt"/>
</dbReference>
<dbReference type="InterPro" id="IPR006512">
    <property type="entry name" value="YidE_YbjL"/>
</dbReference>
<dbReference type="NCBIfam" id="TIGR03802">
    <property type="entry name" value="Asp_Ala_antiprt"/>
    <property type="match status" value="1"/>
</dbReference>
<dbReference type="PANTHER" id="PTHR30445:SF9">
    <property type="match status" value="1"/>
</dbReference>
<dbReference type="PANTHER" id="PTHR30445">
    <property type="entry name" value="K(+)_H(+) ANTIPORTER SUBUNIT KHTT"/>
    <property type="match status" value="1"/>
</dbReference>
<dbReference type="Pfam" id="PF06826">
    <property type="entry name" value="Asp-Al_Ex"/>
    <property type="match status" value="2"/>
</dbReference>
<proteinExistence type="evidence at protein level"/>
<comment type="function">
    <text evidence="2">Catalyzes the electrogenic exchange of aspartate with alanine.</text>
</comment>
<comment type="interaction">
    <interactant intactId="EBI-6406530">
        <id>Q8L3K8</id>
    </interactant>
    <interactant intactId="EBI-6406530">
        <id>Q8L3K8</id>
        <label>aspT</label>
    </interactant>
    <organismsDiffer>false</organismsDiffer>
    <experiments>2</experiments>
</comment>
<comment type="subcellular location">
    <subcellularLocation>
        <location evidence="3">Cell membrane</location>
        <topology evidence="3">Multi-pass membrane protein</topology>
    </subcellularLocation>
</comment>
<comment type="similarity">
    <text evidence="3">Belongs to the AAE transporter (TC 2.A.81) family.</text>
</comment>
<protein>
    <recommendedName>
        <fullName>Aspartate/alanine antiporter</fullName>
    </recommendedName>
</protein>
<feature type="chain" id="PRO_0000208748" description="Aspartate/alanine antiporter">
    <location>
        <begin position="1"/>
        <end position="543"/>
    </location>
</feature>
<feature type="transmembrane region" description="Helical" evidence="1">
    <location>
        <begin position="4"/>
        <end position="26"/>
    </location>
</feature>
<feature type="transmembrane region" description="Helical" evidence="1">
    <location>
        <begin position="33"/>
        <end position="55"/>
    </location>
</feature>
<feature type="transmembrane region" description="Helical" evidence="1">
    <location>
        <begin position="88"/>
        <end position="110"/>
    </location>
</feature>
<feature type="transmembrane region" description="Helical" evidence="1">
    <location>
        <begin position="117"/>
        <end position="139"/>
    </location>
</feature>
<feature type="transmembrane region" description="Helical" evidence="1">
    <location>
        <begin position="159"/>
        <end position="178"/>
    </location>
</feature>
<feature type="transmembrane region" description="Helical" evidence="1">
    <location>
        <begin position="362"/>
        <end position="381"/>
    </location>
</feature>
<feature type="transmembrane region" description="Helical" evidence="1">
    <location>
        <begin position="385"/>
        <end position="407"/>
    </location>
</feature>
<feature type="transmembrane region" description="Helical" evidence="1">
    <location>
        <begin position="428"/>
        <end position="450"/>
    </location>
</feature>
<feature type="transmembrane region" description="Helical" evidence="1">
    <location>
        <begin position="455"/>
        <end position="477"/>
    </location>
</feature>
<feature type="transmembrane region" description="Helical" evidence="1">
    <location>
        <begin position="520"/>
        <end position="542"/>
    </location>
</feature>
<name>ASPT_TETHA</name>
<gene>
    <name type="primary">aspT</name>
</gene>
<evidence type="ECO:0000255" key="1"/>
<evidence type="ECO:0000269" key="2">
    <source>
    </source>
</evidence>
<evidence type="ECO:0000305" key="3"/>
<reference key="1">
    <citation type="journal article" date="2002" name="J. Bacteriol.">
        <title>Plasmid-encoded asp operon confers a proton motive metabolic cycle catalyzed by an aspartate-alanine exchange reaction.</title>
        <authorList>
            <person name="Abe K."/>
            <person name="Ohnishi F."/>
            <person name="Yagi K."/>
            <person name="Nakajima T."/>
            <person name="Higuchi T."/>
            <person name="Sano M."/>
            <person name="Machida M."/>
            <person name="Sarker R.I."/>
            <person name="Maloney P.C."/>
        </authorList>
    </citation>
    <scope>NUCLEOTIDE SEQUENCE [GENOMIC DNA]</scope>
    <scope>FUNCTION</scope>
    <source>
        <strain>D10</strain>
    </source>
</reference>